<organism>
    <name type="scientific">Brevibacillus brevis (strain 47 / JCM 6285 / NBRC 100599)</name>
    <dbReference type="NCBI Taxonomy" id="358681"/>
    <lineage>
        <taxon>Bacteria</taxon>
        <taxon>Bacillati</taxon>
        <taxon>Bacillota</taxon>
        <taxon>Bacilli</taxon>
        <taxon>Bacillales</taxon>
        <taxon>Paenibacillaceae</taxon>
        <taxon>Brevibacillus</taxon>
    </lineage>
</organism>
<dbReference type="EMBL" id="AP008955">
    <property type="protein sequence ID" value="BAH44712.1"/>
    <property type="molecule type" value="Genomic_DNA"/>
</dbReference>
<dbReference type="SMR" id="C0ZG03"/>
<dbReference type="STRING" id="358681.BBR47_37350"/>
<dbReference type="KEGG" id="bbe:BBR47_37350"/>
<dbReference type="eggNOG" id="COG2052">
    <property type="taxonomic scope" value="Bacteria"/>
</dbReference>
<dbReference type="HOGENOM" id="CLU_165326_0_0_9"/>
<dbReference type="Proteomes" id="UP000001877">
    <property type="component" value="Chromosome"/>
</dbReference>
<dbReference type="HAMAP" id="MF_01503">
    <property type="entry name" value="RemA"/>
    <property type="match status" value="1"/>
</dbReference>
<dbReference type="InterPro" id="IPR007169">
    <property type="entry name" value="RemA-like"/>
</dbReference>
<dbReference type="NCBIfam" id="NF046064">
    <property type="entry name" value="MtxBflmRegRemA"/>
    <property type="match status" value="1"/>
</dbReference>
<dbReference type="NCBIfam" id="NF003315">
    <property type="entry name" value="PRK04323.1"/>
    <property type="match status" value="1"/>
</dbReference>
<dbReference type="PANTHER" id="PTHR38449:SF1">
    <property type="entry name" value="REGULATORY PROTEIN SSL2874-RELATED"/>
    <property type="match status" value="1"/>
</dbReference>
<dbReference type="PANTHER" id="PTHR38449">
    <property type="entry name" value="REGULATORY PROTEIN TM_1690-RELATED"/>
    <property type="match status" value="1"/>
</dbReference>
<dbReference type="Pfam" id="PF04025">
    <property type="entry name" value="RemA-like"/>
    <property type="match status" value="1"/>
</dbReference>
<reference key="1">
    <citation type="submission" date="2005-03" db="EMBL/GenBank/DDBJ databases">
        <title>Brevibacillus brevis strain 47, complete genome.</title>
        <authorList>
            <person name="Hosoyama A."/>
            <person name="Yamada R."/>
            <person name="Hongo Y."/>
            <person name="Terui Y."/>
            <person name="Ankai A."/>
            <person name="Masuyama W."/>
            <person name="Sekiguchi M."/>
            <person name="Takeda T."/>
            <person name="Asano K."/>
            <person name="Ohji S."/>
            <person name="Ichikawa N."/>
            <person name="Narita S."/>
            <person name="Aoki N."/>
            <person name="Miura H."/>
            <person name="Matsushita S."/>
            <person name="Sekigawa T."/>
            <person name="Yamagata H."/>
            <person name="Yoshikawa H."/>
            <person name="Udaka S."/>
            <person name="Tanikawa S."/>
            <person name="Fujita N."/>
        </authorList>
    </citation>
    <scope>NUCLEOTIDE SEQUENCE [LARGE SCALE GENOMIC DNA]</scope>
    <source>
        <strain>47 / JCM 6285 / NBRC 100599</strain>
    </source>
</reference>
<keyword id="KW-1185">Reference proteome</keyword>
<accession>C0ZG03</accession>
<name>Y3735_BREBN</name>
<protein>
    <recommendedName>
        <fullName evidence="1">Putative regulatory protein BBR47_37350</fullName>
    </recommendedName>
</protein>
<sequence>MAIKLINIGFGNIVNANRIISIVSPESAPIKRIIQEARDRNMLVDATYGRRTRAVIITDSDHVILSAVQPETVAQRLTTKDDESDE</sequence>
<proteinExistence type="inferred from homology"/>
<comment type="similarity">
    <text evidence="1">Belongs to the RemA family.</text>
</comment>
<feature type="chain" id="PRO_1000185013" description="Putative regulatory protein BBR47_37350">
    <location>
        <begin position="1"/>
        <end position="86"/>
    </location>
</feature>
<gene>
    <name type="ordered locus">BBR47_37350</name>
</gene>
<evidence type="ECO:0000255" key="1">
    <source>
        <dbReference type="HAMAP-Rule" id="MF_01503"/>
    </source>
</evidence>